<sequence>MHLSQLLACALLLTLLSLRPSEAKPGAPPKVPRTPPAEELAEPQAAGGGQKKGDKAPGGGGANLKGDRSRLLRDLRVDTKSRAAWARLLQEHPNARKYKGANKKGLSKGCFGLKLDRIGSMSGLGC</sequence>
<keyword id="KW-0002">3D-structure</keyword>
<keyword id="KW-0165">Cleavage on pair of basic residues</keyword>
<keyword id="KW-0903">Direct protein sequencing</keyword>
<keyword id="KW-1015">Disulfide bond</keyword>
<keyword id="KW-0372">Hormone</keyword>
<keyword id="KW-0892">Osteogenesis</keyword>
<keyword id="KW-0582">Pharmaceutical</keyword>
<keyword id="KW-1267">Proteomics identification</keyword>
<keyword id="KW-1185">Reference proteome</keyword>
<keyword id="KW-0964">Secreted</keyword>
<keyword id="KW-0732">Signal</keyword>
<keyword id="KW-0838">Vasoactive</keyword>
<organism>
    <name type="scientific">Homo sapiens</name>
    <name type="common">Human</name>
    <dbReference type="NCBI Taxonomy" id="9606"/>
    <lineage>
        <taxon>Eukaryota</taxon>
        <taxon>Metazoa</taxon>
        <taxon>Chordata</taxon>
        <taxon>Craniata</taxon>
        <taxon>Vertebrata</taxon>
        <taxon>Euteleostomi</taxon>
        <taxon>Mammalia</taxon>
        <taxon>Eutheria</taxon>
        <taxon>Euarchontoglires</taxon>
        <taxon>Primates</taxon>
        <taxon>Haplorrhini</taxon>
        <taxon>Catarrhini</taxon>
        <taxon>Hominidae</taxon>
        <taxon>Homo</taxon>
    </lineage>
</organism>
<reference key="1">
    <citation type="journal article" date="1991" name="Biochem. Biophys. Res. Commun.">
        <title>Gene and precursor structures of human C-type natriuretic peptide.</title>
        <authorList>
            <person name="Tawaragi Y."/>
            <person name="Fuchimura K."/>
            <person name="Tanaka S."/>
            <person name="Minamino N."/>
            <person name="Kangawa K."/>
            <person name="Matsuo H."/>
        </authorList>
    </citation>
    <scope>NUCLEOTIDE SEQUENCE [GENOMIC DNA]</scope>
</reference>
<reference key="2">
    <citation type="journal article" date="1992" name="Hypertension">
        <title>Human C-type natriuretic peptide. Characterization of the gene and peptide.</title>
        <authorList>
            <person name="Ogawa Y."/>
            <person name="Nakao K."/>
            <person name="Nakagawa O."/>
            <person name="Komatsu Y."/>
            <person name="Hosoda K."/>
            <person name="Suga S."/>
            <person name="Arai H."/>
            <person name="Nagata K."/>
            <person name="Yoshida N."/>
            <person name="Imura H."/>
        </authorList>
    </citation>
    <scope>NUCLEOTIDE SEQUENCE [GENOMIC DNA]</scope>
</reference>
<reference key="3">
    <citation type="journal article" date="2005" name="Nature">
        <title>Generation and annotation of the DNA sequences of human chromosomes 2 and 4.</title>
        <authorList>
            <person name="Hillier L.W."/>
            <person name="Graves T.A."/>
            <person name="Fulton R.S."/>
            <person name="Fulton L.A."/>
            <person name="Pepin K.H."/>
            <person name="Minx P."/>
            <person name="Wagner-McPherson C."/>
            <person name="Layman D."/>
            <person name="Wylie K."/>
            <person name="Sekhon M."/>
            <person name="Becker M.C."/>
            <person name="Fewell G.A."/>
            <person name="Delehaunty K.D."/>
            <person name="Miner T.L."/>
            <person name="Nash W.E."/>
            <person name="Kremitzki C."/>
            <person name="Oddy L."/>
            <person name="Du H."/>
            <person name="Sun H."/>
            <person name="Bradshaw-Cordum H."/>
            <person name="Ali J."/>
            <person name="Carter J."/>
            <person name="Cordes M."/>
            <person name="Harris A."/>
            <person name="Isak A."/>
            <person name="van Brunt A."/>
            <person name="Nguyen C."/>
            <person name="Du F."/>
            <person name="Courtney L."/>
            <person name="Kalicki J."/>
            <person name="Ozersky P."/>
            <person name="Abbott S."/>
            <person name="Armstrong J."/>
            <person name="Belter E.A."/>
            <person name="Caruso L."/>
            <person name="Cedroni M."/>
            <person name="Cotton M."/>
            <person name="Davidson T."/>
            <person name="Desai A."/>
            <person name="Elliott G."/>
            <person name="Erb T."/>
            <person name="Fronick C."/>
            <person name="Gaige T."/>
            <person name="Haakenson W."/>
            <person name="Haglund K."/>
            <person name="Holmes A."/>
            <person name="Harkins R."/>
            <person name="Kim K."/>
            <person name="Kruchowski S.S."/>
            <person name="Strong C.M."/>
            <person name="Grewal N."/>
            <person name="Goyea E."/>
            <person name="Hou S."/>
            <person name="Levy A."/>
            <person name="Martinka S."/>
            <person name="Mead K."/>
            <person name="McLellan M.D."/>
            <person name="Meyer R."/>
            <person name="Randall-Maher J."/>
            <person name="Tomlinson C."/>
            <person name="Dauphin-Kohlberg S."/>
            <person name="Kozlowicz-Reilly A."/>
            <person name="Shah N."/>
            <person name="Swearengen-Shahid S."/>
            <person name="Snider J."/>
            <person name="Strong J.T."/>
            <person name="Thompson J."/>
            <person name="Yoakum M."/>
            <person name="Leonard S."/>
            <person name="Pearman C."/>
            <person name="Trani L."/>
            <person name="Radionenko M."/>
            <person name="Waligorski J.E."/>
            <person name="Wang C."/>
            <person name="Rock S.M."/>
            <person name="Tin-Wollam A.-M."/>
            <person name="Maupin R."/>
            <person name="Latreille P."/>
            <person name="Wendl M.C."/>
            <person name="Yang S.-P."/>
            <person name="Pohl C."/>
            <person name="Wallis J.W."/>
            <person name="Spieth J."/>
            <person name="Bieri T.A."/>
            <person name="Berkowicz N."/>
            <person name="Nelson J.O."/>
            <person name="Osborne J."/>
            <person name="Ding L."/>
            <person name="Meyer R."/>
            <person name="Sabo A."/>
            <person name="Shotland Y."/>
            <person name="Sinha P."/>
            <person name="Wohldmann P.E."/>
            <person name="Cook L.L."/>
            <person name="Hickenbotham M.T."/>
            <person name="Eldred J."/>
            <person name="Williams D."/>
            <person name="Jones T.A."/>
            <person name="She X."/>
            <person name="Ciccarelli F.D."/>
            <person name="Izaurralde E."/>
            <person name="Taylor J."/>
            <person name="Schmutz J."/>
            <person name="Myers R.M."/>
            <person name="Cox D.R."/>
            <person name="Huang X."/>
            <person name="McPherson J.D."/>
            <person name="Mardis E.R."/>
            <person name="Clifton S.W."/>
            <person name="Warren W.C."/>
            <person name="Chinwalla A.T."/>
            <person name="Eddy S.R."/>
            <person name="Marra M.A."/>
            <person name="Ovcharenko I."/>
            <person name="Furey T.S."/>
            <person name="Miller W."/>
            <person name="Eichler E.E."/>
            <person name="Bork P."/>
            <person name="Suyama M."/>
            <person name="Torrents D."/>
            <person name="Waterston R.H."/>
            <person name="Wilson R.K."/>
        </authorList>
    </citation>
    <scope>NUCLEOTIDE SEQUENCE [LARGE SCALE GENOMIC DNA]</scope>
</reference>
<reference key="4">
    <citation type="journal article" date="2004" name="Genome Res.">
        <title>The status, quality, and expansion of the NIH full-length cDNA project: the Mammalian Gene Collection (MGC).</title>
        <authorList>
            <consortium name="The MGC Project Team"/>
        </authorList>
    </citation>
    <scope>NUCLEOTIDE SEQUENCE [LARGE SCALE MRNA]</scope>
    <source>
        <tissue>Brain</tissue>
    </source>
</reference>
<reference key="5">
    <citation type="journal article" date="1992" name="Biochem. Biophys. Res. Commun.">
        <title>Isolation and identification of C-type natriuretic peptide in human monocytic cell line, THP-1.</title>
        <authorList>
            <person name="Ishizaka Y."/>
            <person name="Kangawa K."/>
            <person name="Minamino N."/>
            <person name="Ishii K."/>
            <person name="Takano S."/>
            <person name="Eto T."/>
            <person name="Matsuo H."/>
        </authorList>
    </citation>
    <scope>PROTEIN SEQUENCE OF 98-126</scope>
</reference>
<reference key="6">
    <citation type="journal article" date="1991" name="Science">
        <title>Selective activation of the B natriuretic peptide receptor by C-type natriuretic peptide (CNP).</title>
        <authorList>
            <person name="Koller K.J."/>
            <person name="Lowe D.G."/>
            <person name="Bennett G.L."/>
            <person name="Minamino N."/>
            <person name="Kangawa K."/>
            <person name="Matsuo H."/>
            <person name="Goeddel D.V."/>
        </authorList>
    </citation>
    <scope>FUNCTION (CNP-22)</scope>
</reference>
<reference key="7">
    <citation type="journal article" date="1998" name="Nephrol. Dial. Transplant.">
        <title>The renal natriuretic peptide urodilatin is present in human kidney.</title>
        <authorList>
            <person name="Herten M."/>
            <person name="Lenz W."/>
            <person name="Gerzer R."/>
            <person name="Drummer C."/>
        </authorList>
    </citation>
    <scope>TISSUE SPECIFICITY (CNP-22)</scope>
</reference>
<reference key="8">
    <citation type="journal article" date="2011" name="J. Biol. Chem.">
        <title>Insulin-degrading enzyme modulates the natriuretic peptide-mediated signaling response.</title>
        <authorList>
            <person name="Ralat L.A."/>
            <person name="Guo Q."/>
            <person name="Ren M."/>
            <person name="Funke T."/>
            <person name="Dickey D.M."/>
            <person name="Potter L.R."/>
            <person name="Tang W.J."/>
        </authorList>
    </citation>
    <scope>FUNCTION (CNP-22)</scope>
    <scope>PROTEOLYTIC DEGRADATION BY IDE (CNP-22)</scope>
</reference>
<reference key="9">
    <citation type="journal article" date="2019" name="Int. J. Cardiol.">
        <title>Natriuretic peptide based therapeutics for heart failure: cenderitide: a novel first-in-class designer natriuretic peptide.</title>
        <authorList>
            <person name="Ichiki T."/>
            <person name="Dzhoyashvili N."/>
            <person name="Burnett J.C. Jr."/>
        </authorList>
    </citation>
    <scope>PHARMACEUTICAL</scope>
    <scope>REVIEW</scope>
</reference>
<reference key="10">
    <citation type="journal article" date="2001" name="Science">
        <title>Allosteric activation of a spring-loaded natriuretic peptide receptor dimer by hormone.</title>
        <authorList>
            <person name="He X.-L."/>
            <person name="Chow D.-C."/>
            <person name="Martick M.M."/>
            <person name="Garcia K.C."/>
        </authorList>
    </citation>
    <scope>X-RAY CRYSTALLOGRAPHY (2.0 ANGSTROMS) OF 105-126 IN COMPLEX WITH NPR3</scope>
    <scope>DISULFIDE BOND</scope>
</reference>
<evidence type="ECO:0000250" key="1">
    <source>
        <dbReference type="UniProtKB" id="Q61839"/>
    </source>
</evidence>
<evidence type="ECO:0000255" key="2"/>
<evidence type="ECO:0000256" key="3">
    <source>
        <dbReference type="SAM" id="MobiDB-lite"/>
    </source>
</evidence>
<evidence type="ECO:0000269" key="4">
    <source>
    </source>
</evidence>
<evidence type="ECO:0000269" key="5">
    <source>
    </source>
</evidence>
<evidence type="ECO:0000269" key="6">
    <source>
    </source>
</evidence>
<evidence type="ECO:0000269" key="7">
    <source>
    </source>
</evidence>
<evidence type="ECO:0000269" key="8">
    <source>
    </source>
</evidence>
<evidence type="ECO:0000305" key="9"/>
<evidence type="ECO:0000305" key="10">
    <source>
    </source>
</evidence>
<gene>
    <name type="primary">NPPC</name>
    <name type="synonym">CNP2</name>
</gene>
<proteinExistence type="evidence at protein level"/>
<feature type="signal peptide" evidence="2">
    <location>
        <begin position="1"/>
        <end position="23"/>
    </location>
</feature>
<feature type="propeptide" id="PRO_0000001553">
    <location>
        <begin position="24"/>
        <end position="73"/>
    </location>
</feature>
<feature type="peptide" id="PRO_0000001554" description="CNP-53">
    <location>
        <begin position="74"/>
        <end position="126"/>
    </location>
</feature>
<feature type="peptide" id="PRO_0000001555" description="CNP-29" evidence="5">
    <location>
        <begin position="98"/>
        <end position="126"/>
    </location>
</feature>
<feature type="peptide" id="PRO_0000001556" description="CNP-22">
    <location>
        <begin position="105"/>
        <end position="126"/>
    </location>
</feature>
<feature type="region of interest" description="Disordered" evidence="3">
    <location>
        <begin position="20"/>
        <end position="71"/>
    </location>
</feature>
<feature type="compositionally biased region" description="Pro residues" evidence="3">
    <location>
        <begin position="26"/>
        <end position="35"/>
    </location>
</feature>
<feature type="compositionally biased region" description="Gly residues" evidence="3">
    <location>
        <begin position="46"/>
        <end position="63"/>
    </location>
</feature>
<feature type="disulfide bond" evidence="4">
    <location>
        <begin position="110"/>
        <end position="126"/>
    </location>
</feature>
<feature type="sequence variant" id="VAR_014583" description="In dbSNP:rs5267.">
    <original>R</original>
    <variation>Q</variation>
    <location>
        <position position="82"/>
    </location>
</feature>
<name>ANFC_HUMAN</name>
<dbReference type="EMBL" id="M64710">
    <property type="protein sequence ID" value="AAA35703.1"/>
    <property type="molecule type" value="Genomic_DNA"/>
</dbReference>
<dbReference type="EMBL" id="D90337">
    <property type="protein sequence ID" value="BAA14351.1"/>
    <property type="molecule type" value="Genomic_DNA"/>
</dbReference>
<dbReference type="EMBL" id="AC013435">
    <property type="protein sequence ID" value="AAX88912.1"/>
    <property type="molecule type" value="Genomic_DNA"/>
</dbReference>
<dbReference type="EMBL" id="BC069120">
    <property type="protein sequence ID" value="AAH69120.1"/>
    <property type="molecule type" value="mRNA"/>
</dbReference>
<dbReference type="EMBL" id="BC105065">
    <property type="protein sequence ID" value="AAI05066.1"/>
    <property type="molecule type" value="mRNA"/>
</dbReference>
<dbReference type="EMBL" id="BC105067">
    <property type="protein sequence ID" value="AAI05068.1"/>
    <property type="molecule type" value="mRNA"/>
</dbReference>
<dbReference type="CCDS" id="CCDS2489.1"/>
<dbReference type="PIR" id="JT0567">
    <property type="entry name" value="AWHUC"/>
</dbReference>
<dbReference type="RefSeq" id="NP_077720.1">
    <property type="nucleotide sequence ID" value="NM_024409.4"/>
</dbReference>
<dbReference type="RefSeq" id="XP_011509547.1">
    <property type="nucleotide sequence ID" value="XM_011511245.4"/>
</dbReference>
<dbReference type="RefSeq" id="XP_054198270.1">
    <property type="nucleotide sequence ID" value="XM_054342295.1"/>
</dbReference>
<dbReference type="PDB" id="1JDP">
    <property type="method" value="X-ray"/>
    <property type="resolution" value="2.00 A"/>
    <property type="chains" value="H=105-126"/>
</dbReference>
<dbReference type="PDBsum" id="1JDP"/>
<dbReference type="SMR" id="P23582"/>
<dbReference type="BioGRID" id="110940">
    <property type="interactions" value="10"/>
</dbReference>
<dbReference type="FunCoup" id="P23582">
    <property type="interactions" value="247"/>
</dbReference>
<dbReference type="STRING" id="9606.ENSP00000387159"/>
<dbReference type="TCDB" id="1.C.46.1.1">
    <property type="family name" value="the c-type natriuretic peptide (cnp) family"/>
</dbReference>
<dbReference type="GlyGen" id="P23582">
    <property type="glycosylation" value="2 sites, 1 O-linked glycan (2 sites)"/>
</dbReference>
<dbReference type="iPTMnet" id="P23582"/>
<dbReference type="PhosphoSitePlus" id="P23582"/>
<dbReference type="BioMuta" id="NPPC"/>
<dbReference type="DMDM" id="113850"/>
<dbReference type="jPOST" id="P23582"/>
<dbReference type="MassIVE" id="P23582"/>
<dbReference type="PaxDb" id="9606-ENSP00000387159"/>
<dbReference type="PeptideAtlas" id="P23582"/>
<dbReference type="ProteomicsDB" id="54134"/>
<dbReference type="Antibodypedia" id="50954">
    <property type="antibodies" value="284 antibodies from 31 providers"/>
</dbReference>
<dbReference type="DNASU" id="4880"/>
<dbReference type="Ensembl" id="ENST00000295440.2">
    <property type="protein sequence ID" value="ENSP00000295440.2"/>
    <property type="gene ID" value="ENSG00000163273.4"/>
</dbReference>
<dbReference type="Ensembl" id="ENST00000409852.2">
    <property type="protein sequence ID" value="ENSP00000387159.1"/>
    <property type="gene ID" value="ENSG00000163273.4"/>
</dbReference>
<dbReference type="GeneID" id="4880"/>
<dbReference type="KEGG" id="hsa:4880"/>
<dbReference type="MANE-Select" id="ENST00000409852.2">
    <property type="protein sequence ID" value="ENSP00000387159.1"/>
    <property type="RefSeq nucleotide sequence ID" value="NM_024409.4"/>
    <property type="RefSeq protein sequence ID" value="NP_077720.1"/>
</dbReference>
<dbReference type="UCSC" id="uc002vsl.3">
    <property type="organism name" value="human"/>
</dbReference>
<dbReference type="AGR" id="HGNC:7941"/>
<dbReference type="CTD" id="4880"/>
<dbReference type="DisGeNET" id="4880"/>
<dbReference type="GeneCards" id="NPPC"/>
<dbReference type="HGNC" id="HGNC:7941">
    <property type="gene designation" value="NPPC"/>
</dbReference>
<dbReference type="HPA" id="ENSG00000163273">
    <property type="expression patterns" value="Tissue enhanced (brain)"/>
</dbReference>
<dbReference type="MalaCards" id="NPPC"/>
<dbReference type="MIM" id="600296">
    <property type="type" value="gene"/>
</dbReference>
<dbReference type="neXtProt" id="NX_P23582"/>
<dbReference type="OpenTargets" id="ENSG00000163273"/>
<dbReference type="PharmGKB" id="PA31735"/>
<dbReference type="VEuPathDB" id="HostDB:ENSG00000163273"/>
<dbReference type="eggNOG" id="ENOG502S2QY">
    <property type="taxonomic scope" value="Eukaryota"/>
</dbReference>
<dbReference type="GeneTree" id="ENSGT00390000015492"/>
<dbReference type="HOGENOM" id="CLU_160791_0_0_1"/>
<dbReference type="InParanoid" id="P23582"/>
<dbReference type="OMA" id="HDYPNAR"/>
<dbReference type="OrthoDB" id="8911465at2759"/>
<dbReference type="PAN-GO" id="P23582">
    <property type="GO annotations" value="4 GO annotations based on evolutionary models"/>
</dbReference>
<dbReference type="PhylomeDB" id="P23582"/>
<dbReference type="TreeFam" id="TF106305"/>
<dbReference type="PathwayCommons" id="P23582"/>
<dbReference type="Reactome" id="R-HSA-5578768">
    <property type="pathway name" value="Physiological factors"/>
</dbReference>
<dbReference type="SignaLink" id="P23582"/>
<dbReference type="SIGNOR" id="P23582"/>
<dbReference type="BioGRID-ORCS" id="4880">
    <property type="hits" value="11 hits in 1134 CRISPR screens"/>
</dbReference>
<dbReference type="EvolutionaryTrace" id="P23582"/>
<dbReference type="GenomeRNAi" id="4880"/>
<dbReference type="Pharos" id="P23582">
    <property type="development level" value="Tbio"/>
</dbReference>
<dbReference type="PRO" id="PR:P23582"/>
<dbReference type="Proteomes" id="UP000005640">
    <property type="component" value="Chromosome 2"/>
</dbReference>
<dbReference type="RNAct" id="P23582">
    <property type="molecule type" value="protein"/>
</dbReference>
<dbReference type="Bgee" id="ENSG00000163273">
    <property type="expression patterns" value="Expressed in male germ line stem cell (sensu Vertebrata) in testis and 85 other cell types or tissues"/>
</dbReference>
<dbReference type="GO" id="GO:0005576">
    <property type="term" value="C:extracellular region"/>
    <property type="evidence" value="ECO:0000304"/>
    <property type="project" value="Reactome"/>
</dbReference>
<dbReference type="GO" id="GO:0005615">
    <property type="term" value="C:extracellular space"/>
    <property type="evidence" value="ECO:0007669"/>
    <property type="project" value="Ensembl"/>
</dbReference>
<dbReference type="GO" id="GO:0032991">
    <property type="term" value="C:protein-containing complex"/>
    <property type="evidence" value="ECO:0000314"/>
    <property type="project" value="CAFA"/>
</dbReference>
<dbReference type="GO" id="GO:0030141">
    <property type="term" value="C:secretory granule"/>
    <property type="evidence" value="ECO:0007669"/>
    <property type="project" value="Ensembl"/>
</dbReference>
<dbReference type="GO" id="GO:0005179">
    <property type="term" value="F:hormone activity"/>
    <property type="evidence" value="ECO:0000318"/>
    <property type="project" value="GO_Central"/>
</dbReference>
<dbReference type="GO" id="GO:0051427">
    <property type="term" value="F:hormone receptor binding"/>
    <property type="evidence" value="ECO:0000353"/>
    <property type="project" value="UniProtKB"/>
</dbReference>
<dbReference type="GO" id="GO:0005102">
    <property type="term" value="F:signaling receptor binding"/>
    <property type="evidence" value="ECO:0000353"/>
    <property type="project" value="UniProtKB"/>
</dbReference>
<dbReference type="GO" id="GO:0001525">
    <property type="term" value="P:angiogenesis"/>
    <property type="evidence" value="ECO:0007669"/>
    <property type="project" value="Ensembl"/>
</dbReference>
<dbReference type="GO" id="GO:0097746">
    <property type="term" value="P:blood vessel diameter maintenance"/>
    <property type="evidence" value="ECO:0007669"/>
    <property type="project" value="UniProtKB-KW"/>
</dbReference>
<dbReference type="GO" id="GO:0001974">
    <property type="term" value="P:blood vessel remodeling"/>
    <property type="evidence" value="ECO:0007669"/>
    <property type="project" value="Ensembl"/>
</dbReference>
<dbReference type="GO" id="GO:0061939">
    <property type="term" value="P:c-di-GMP signaling"/>
    <property type="evidence" value="ECO:0007669"/>
    <property type="project" value="Ensembl"/>
</dbReference>
<dbReference type="GO" id="GO:1904588">
    <property type="term" value="P:cellular response to glycoprotein"/>
    <property type="evidence" value="ECO:0007669"/>
    <property type="project" value="Ensembl"/>
</dbReference>
<dbReference type="GO" id="GO:0006182">
    <property type="term" value="P:cGMP biosynthetic process"/>
    <property type="evidence" value="ECO:0000314"/>
    <property type="project" value="GO_Central"/>
</dbReference>
<dbReference type="GO" id="GO:0019934">
    <property type="term" value="P:cGMP-mediated signaling"/>
    <property type="evidence" value="ECO:0007669"/>
    <property type="project" value="Ensembl"/>
</dbReference>
<dbReference type="GO" id="GO:0051276">
    <property type="term" value="P:chromosome organization"/>
    <property type="evidence" value="ECO:0007669"/>
    <property type="project" value="Ensembl"/>
</dbReference>
<dbReference type="GO" id="GO:0001549">
    <property type="term" value="P:cumulus cell differentiation"/>
    <property type="evidence" value="ECO:0007669"/>
    <property type="project" value="Ensembl"/>
</dbReference>
<dbReference type="GO" id="GO:0035483">
    <property type="term" value="P:gastric emptying"/>
    <property type="evidence" value="ECO:0007669"/>
    <property type="project" value="Ensembl"/>
</dbReference>
<dbReference type="GO" id="GO:0003418">
    <property type="term" value="P:growth plate cartilage chondrocyte differentiation"/>
    <property type="evidence" value="ECO:0000250"/>
    <property type="project" value="UniProtKB"/>
</dbReference>
<dbReference type="GO" id="GO:0003419">
    <property type="term" value="P:growth plate cartilage chondrocyte proliferation"/>
    <property type="evidence" value="ECO:0000250"/>
    <property type="project" value="UniProtKB"/>
</dbReference>
<dbReference type="GO" id="GO:0006874">
    <property type="term" value="P:intracellular calcium ion homeostasis"/>
    <property type="evidence" value="ECO:0007669"/>
    <property type="project" value="Ensembl"/>
</dbReference>
<dbReference type="GO" id="GO:1903537">
    <property type="term" value="P:meiotic cell cycle process involved in oocyte maturation"/>
    <property type="evidence" value="ECO:0007669"/>
    <property type="project" value="Ensembl"/>
</dbReference>
<dbReference type="GO" id="GO:0071965">
    <property type="term" value="P:multicellular organismal locomotion"/>
    <property type="evidence" value="ECO:0007669"/>
    <property type="project" value="Ensembl"/>
</dbReference>
<dbReference type="GO" id="GO:0008285">
    <property type="term" value="P:negative regulation of cell population proliferation"/>
    <property type="evidence" value="ECO:0007669"/>
    <property type="project" value="Ensembl"/>
</dbReference>
<dbReference type="GO" id="GO:0032966">
    <property type="term" value="P:negative regulation of collagen biosynthetic process"/>
    <property type="evidence" value="ECO:0007669"/>
    <property type="project" value="Ensembl"/>
</dbReference>
<dbReference type="GO" id="GO:2000279">
    <property type="term" value="P:negative regulation of DNA biosynthetic process"/>
    <property type="evidence" value="ECO:0007669"/>
    <property type="project" value="Ensembl"/>
</dbReference>
<dbReference type="GO" id="GO:0051447">
    <property type="term" value="P:negative regulation of meiotic cell cycle"/>
    <property type="evidence" value="ECO:0000314"/>
    <property type="project" value="MGI"/>
</dbReference>
<dbReference type="GO" id="GO:0043524">
    <property type="term" value="P:negative regulation of neuron apoptotic process"/>
    <property type="evidence" value="ECO:0007669"/>
    <property type="project" value="Ensembl"/>
</dbReference>
<dbReference type="GO" id="GO:1900194">
    <property type="term" value="P:negative regulation of oocyte maturation"/>
    <property type="evidence" value="ECO:0000314"/>
    <property type="project" value="MGI"/>
</dbReference>
<dbReference type="GO" id="GO:0001503">
    <property type="term" value="P:ossification"/>
    <property type="evidence" value="ECO:0007669"/>
    <property type="project" value="UniProtKB-KW"/>
</dbReference>
<dbReference type="GO" id="GO:0010753">
    <property type="term" value="P:positive regulation of cGMP-mediated signaling"/>
    <property type="evidence" value="ECO:0007669"/>
    <property type="project" value="Ensembl"/>
</dbReference>
<dbReference type="GO" id="GO:0045669">
    <property type="term" value="P:positive regulation of osteoblast differentiation"/>
    <property type="evidence" value="ECO:0007669"/>
    <property type="project" value="Ensembl"/>
</dbReference>
<dbReference type="GO" id="GO:0009791">
    <property type="term" value="P:post-embryonic development"/>
    <property type="evidence" value="ECO:0007669"/>
    <property type="project" value="Ensembl"/>
</dbReference>
<dbReference type="GO" id="GO:0006457">
    <property type="term" value="P:protein folding"/>
    <property type="evidence" value="ECO:0000314"/>
    <property type="project" value="CAFA"/>
</dbReference>
<dbReference type="GO" id="GO:0007168">
    <property type="term" value="P:receptor guanylyl cyclase signaling pathway"/>
    <property type="evidence" value="ECO:0000314"/>
    <property type="project" value="UniProtKB"/>
</dbReference>
<dbReference type="GO" id="GO:0040014">
    <property type="term" value="P:regulation of multicellular organism growth"/>
    <property type="evidence" value="ECO:0007669"/>
    <property type="project" value="Ensembl"/>
</dbReference>
<dbReference type="GO" id="GO:0048660">
    <property type="term" value="P:regulation of smooth muscle cell proliferation"/>
    <property type="evidence" value="ECO:0007669"/>
    <property type="project" value="Ensembl"/>
</dbReference>
<dbReference type="GO" id="GO:0048678">
    <property type="term" value="P:response to axon injury"/>
    <property type="evidence" value="ECO:0007669"/>
    <property type="project" value="Ensembl"/>
</dbReference>
<dbReference type="GO" id="GO:0045471">
    <property type="term" value="P:response to ethanol"/>
    <property type="evidence" value="ECO:0007669"/>
    <property type="project" value="Ensembl"/>
</dbReference>
<dbReference type="GO" id="GO:0001666">
    <property type="term" value="P:response to hypoxia"/>
    <property type="evidence" value="ECO:0007669"/>
    <property type="project" value="Ensembl"/>
</dbReference>
<dbReference type="GO" id="GO:0002931">
    <property type="term" value="P:response to ischemia"/>
    <property type="evidence" value="ECO:0007669"/>
    <property type="project" value="Ensembl"/>
</dbReference>
<dbReference type="GO" id="GO:0090649">
    <property type="term" value="P:response to oxygen-glucose deprivation"/>
    <property type="evidence" value="ECO:0007669"/>
    <property type="project" value="Ensembl"/>
</dbReference>
<dbReference type="GO" id="GO:0009410">
    <property type="term" value="P:response to xenobiotic stimulus"/>
    <property type="evidence" value="ECO:0007669"/>
    <property type="project" value="Ensembl"/>
</dbReference>
<dbReference type="InterPro" id="IPR002406">
    <property type="entry name" value="C_natriurtcpep"/>
</dbReference>
<dbReference type="InterPro" id="IPR000663">
    <property type="entry name" value="Natr_peptide"/>
</dbReference>
<dbReference type="InterPro" id="IPR030480">
    <property type="entry name" value="Natr_peptide_CS"/>
</dbReference>
<dbReference type="PANTHER" id="PTHR12167">
    <property type="entry name" value="C-TYPE NATRIURETIC PEPTIDE"/>
    <property type="match status" value="1"/>
</dbReference>
<dbReference type="PANTHER" id="PTHR12167:SF2">
    <property type="entry name" value="C-TYPE NATRIURETIC PEPTIDE"/>
    <property type="match status" value="1"/>
</dbReference>
<dbReference type="Pfam" id="PF00212">
    <property type="entry name" value="ANP"/>
    <property type="match status" value="1"/>
</dbReference>
<dbReference type="PRINTS" id="PR00713">
    <property type="entry name" value="CNATPEPTIDE"/>
</dbReference>
<dbReference type="PRINTS" id="PR00710">
    <property type="entry name" value="NATPEPTIDES"/>
</dbReference>
<dbReference type="SMART" id="SM00183">
    <property type="entry name" value="NAT_PEP"/>
    <property type="match status" value="1"/>
</dbReference>
<dbReference type="PROSITE" id="PS00263">
    <property type="entry name" value="NATRIURETIC_PEPTIDE"/>
    <property type="match status" value="1"/>
</dbReference>
<protein>
    <recommendedName>
        <fullName>C-type natriuretic peptide</fullName>
    </recommendedName>
    <component>
        <recommendedName>
            <fullName>CNP-22</fullName>
        </recommendedName>
    </component>
    <component>
        <recommendedName>
            <fullName>CNP-29</fullName>
        </recommendedName>
    </component>
    <component>
        <recommendedName>
            <fullName>CNP-53</fullName>
        </recommendedName>
    </component>
</protein>
<accession>P23582</accession>
<accession>Q4ZG41</accession>
<comment type="function">
    <molecule>CNP-22</molecule>
    <text evidence="1 4 6 7">Hormone which plays a role in endochondral ossification through regulation of cartilaginous growth plate chondrocytes proliferation and differentiation (By similarity). May also be vasoactive and natriuretic (PubMed:1672777). Acts by specifically binding and stimulating NPR2 to produce cGMP (PubMed:1672777, PubMed:21098034). Binds the clearance receptor NPR3 (PubMed:11533490).</text>
</comment>
<comment type="subcellular location">
    <subcellularLocation>
        <location>Secreted</location>
    </subcellularLocation>
</comment>
<comment type="tissue specificity">
    <molecule>CNP-22</molecule>
    <text evidence="8">In the kidney, predominantly expressed in the distal tubular cells (at protein level).</text>
</comment>
<comment type="PTM">
    <molecule>CNP-22</molecule>
    <text evidence="7">Degraded by IDE (in vitro).</text>
</comment>
<comment type="pharmaceutical">
    <text evidence="10">Cenderitide, a chimeric peptide consisting of C-type natriuretic peptide (NPPC) fused to the C-terminal tail of Dendroaspis natriuretic peptide (DNP) is under phase II clinical trial to treat heart failure (HF) with reduced ejection fraction (HFrEF) and HF with preserved ejection fraction (HFpEF). unlike the 2 peptides from which it is derived, Cenderitide activates both NPR1 and NPR2.</text>
</comment>
<comment type="similarity">
    <text evidence="9">Belongs to the natriuretic peptide family.</text>
</comment>